<proteinExistence type="predicted"/>
<sequence length="345" mass="37828">MTIAGRNKVVAFSIVLSALLCSISLLQAAFVLSGGSLPQLAVARVPPLLHTTGRAFMHVLTFLLPEAAARSLAAVSTAPSNSSTLVAILGTGLSAPLLLTYLLRRFEKTHAVEISYFSLFLCALNFEGVRLFLPILYTGTLTTYAGNVPMQIVMFFRSLALLALFASGIFAKKTLTRQEGAVVFVLCTVAFLISRYTTIHTIHAYRPSQSTQGAILLAQPISESGSIIDSTGEEKTLKVRSSAHRKTRILVTPQRNFTFYYGSHAWHRWFFWTTAVLSALSYGVLGHTLQISHYYIAAAALPFVIAGYRLLTHGLTWSACIVGLFLLNTASVFFIRSVHRVHIWQ</sequence>
<reference key="1">
    <citation type="journal article" date="1998" name="Science">
        <title>Complete genome sequence of Treponema pallidum, the syphilis spirochete.</title>
        <authorList>
            <person name="Fraser C.M."/>
            <person name="Norris S.J."/>
            <person name="Weinstock G.M."/>
            <person name="White O."/>
            <person name="Sutton G.G."/>
            <person name="Dodson R.J."/>
            <person name="Gwinn M.L."/>
            <person name="Hickey E.K."/>
            <person name="Clayton R.A."/>
            <person name="Ketchum K.A."/>
            <person name="Sodergren E."/>
            <person name="Hardham J.M."/>
            <person name="McLeod M.P."/>
            <person name="Salzberg S.L."/>
            <person name="Peterson J.D."/>
            <person name="Khalak H.G."/>
            <person name="Richardson D.L."/>
            <person name="Howell J.K."/>
            <person name="Chidambaram M."/>
            <person name="Utterback T.R."/>
            <person name="McDonald L.A."/>
            <person name="Artiach P."/>
            <person name="Bowman C."/>
            <person name="Cotton M.D."/>
            <person name="Fujii C."/>
            <person name="Garland S.A."/>
            <person name="Hatch B."/>
            <person name="Horst K."/>
            <person name="Roberts K.M."/>
            <person name="Sandusky M."/>
            <person name="Weidman J.F."/>
            <person name="Smith H.O."/>
            <person name="Venter J.C."/>
        </authorList>
    </citation>
    <scope>NUCLEOTIDE SEQUENCE [LARGE SCALE GENOMIC DNA]</scope>
    <source>
        <strain>Nichols</strain>
    </source>
</reference>
<comment type="subcellular location">
    <subcellularLocation>
        <location evidence="2">Cell membrane</location>
        <topology evidence="2">Multi-pass membrane protein</topology>
    </subcellularLocation>
</comment>
<gene>
    <name type="ordered locus">TP_1003</name>
</gene>
<name>Y1003_TREPA</name>
<protein>
    <recommendedName>
        <fullName>Uncharacterized protein TP_1003</fullName>
    </recommendedName>
</protein>
<dbReference type="EMBL" id="AE000520">
    <property type="protein sequence ID" value="AAC65959.1"/>
    <property type="molecule type" value="Genomic_DNA"/>
</dbReference>
<dbReference type="PIR" id="E71254">
    <property type="entry name" value="E71254"/>
</dbReference>
<dbReference type="RefSeq" id="WP_010882447.1">
    <property type="nucleotide sequence ID" value="NC_021490.2"/>
</dbReference>
<dbReference type="IntAct" id="O83968">
    <property type="interactions" value="1"/>
</dbReference>
<dbReference type="STRING" id="243276.TP_1003"/>
<dbReference type="EnsemblBacteria" id="AAC65959">
    <property type="protein sequence ID" value="AAC65959"/>
    <property type="gene ID" value="TP_1003"/>
</dbReference>
<dbReference type="KEGG" id="tpa:TP_1003"/>
<dbReference type="KEGG" id="tpw:TPANIC_1003"/>
<dbReference type="HOGENOM" id="CLU_803954_0_0_12"/>
<dbReference type="OrthoDB" id="358842at2"/>
<dbReference type="Proteomes" id="UP000000811">
    <property type="component" value="Chromosome"/>
</dbReference>
<dbReference type="GO" id="GO:0005886">
    <property type="term" value="C:plasma membrane"/>
    <property type="evidence" value="ECO:0007669"/>
    <property type="project" value="UniProtKB-SubCell"/>
</dbReference>
<feature type="chain" id="PRO_0000202372" description="Uncharacterized protein TP_1003">
    <location>
        <begin position="1"/>
        <end position="345"/>
    </location>
</feature>
<feature type="transmembrane region" description="Helical" evidence="1">
    <location>
        <begin position="9"/>
        <end position="31"/>
    </location>
</feature>
<feature type="transmembrane region" description="Helical" evidence="1">
    <location>
        <begin position="84"/>
        <end position="103"/>
    </location>
</feature>
<feature type="transmembrane region" description="Helical" evidence="1">
    <location>
        <begin position="116"/>
        <end position="138"/>
    </location>
</feature>
<feature type="transmembrane region" description="Helical" evidence="1">
    <location>
        <begin position="148"/>
        <end position="170"/>
    </location>
</feature>
<feature type="transmembrane region" description="Helical" evidence="1">
    <location>
        <begin position="182"/>
        <end position="204"/>
    </location>
</feature>
<feature type="transmembrane region" description="Helical" evidence="1">
    <location>
        <begin position="269"/>
        <end position="286"/>
    </location>
</feature>
<feature type="transmembrane region" description="Helical" evidence="1">
    <location>
        <begin position="291"/>
        <end position="308"/>
    </location>
</feature>
<feature type="transmembrane region" description="Helical" evidence="1">
    <location>
        <begin position="313"/>
        <end position="335"/>
    </location>
</feature>
<keyword id="KW-1003">Cell membrane</keyword>
<keyword id="KW-0472">Membrane</keyword>
<keyword id="KW-1185">Reference proteome</keyword>
<keyword id="KW-0812">Transmembrane</keyword>
<keyword id="KW-1133">Transmembrane helix</keyword>
<accession>O83968</accession>
<evidence type="ECO:0000255" key="1"/>
<evidence type="ECO:0000305" key="2"/>
<organism>
    <name type="scientific">Treponema pallidum (strain Nichols)</name>
    <dbReference type="NCBI Taxonomy" id="243276"/>
    <lineage>
        <taxon>Bacteria</taxon>
        <taxon>Pseudomonadati</taxon>
        <taxon>Spirochaetota</taxon>
        <taxon>Spirochaetia</taxon>
        <taxon>Spirochaetales</taxon>
        <taxon>Treponemataceae</taxon>
        <taxon>Treponema</taxon>
    </lineage>
</organism>